<comment type="catalytic activity">
    <reaction evidence="1">
        <text>urea + 2 H2O + H(+) = hydrogencarbonate + 2 NH4(+)</text>
        <dbReference type="Rhea" id="RHEA:20557"/>
        <dbReference type="ChEBI" id="CHEBI:15377"/>
        <dbReference type="ChEBI" id="CHEBI:15378"/>
        <dbReference type="ChEBI" id="CHEBI:16199"/>
        <dbReference type="ChEBI" id="CHEBI:17544"/>
        <dbReference type="ChEBI" id="CHEBI:28938"/>
        <dbReference type="EC" id="3.5.1.5"/>
    </reaction>
</comment>
<comment type="cofactor">
    <cofactor evidence="1">
        <name>Ni cation</name>
        <dbReference type="ChEBI" id="CHEBI:25516"/>
    </cofactor>
    <text evidence="1">Binds 2 nickel ions per subunit.</text>
</comment>
<comment type="pathway">
    <text evidence="1">Nitrogen metabolism; urea degradation; CO(2) and NH(3) from urea (urease route): step 1/1.</text>
</comment>
<comment type="subunit">
    <text evidence="1">Heterotrimer of UreA (gamma), UreB (beta) and UreC (alpha) subunits. Three heterotrimers associate to form the active enzyme.</text>
</comment>
<comment type="subcellular location">
    <subcellularLocation>
        <location evidence="1">Cytoplasm</location>
    </subcellularLocation>
</comment>
<comment type="PTM">
    <text evidence="1">Carboxylation allows a single lysine to coordinate two nickel ions.</text>
</comment>
<comment type="similarity">
    <text evidence="1">Belongs to the metallo-dependent hydrolases superfamily. Urease alpha subunit family.</text>
</comment>
<keyword id="KW-0963">Cytoplasm</keyword>
<keyword id="KW-0378">Hydrolase</keyword>
<keyword id="KW-0479">Metal-binding</keyword>
<keyword id="KW-0533">Nickel</keyword>
<keyword id="KW-1185">Reference proteome</keyword>
<reference key="1">
    <citation type="journal article" date="2005" name="J. Bacteriol.">
        <title>Insights on evolution of virulence and resistance from the complete genome analysis of an early methicillin-resistant Staphylococcus aureus strain and a biofilm-producing methicillin-resistant Staphylococcus epidermidis strain.</title>
        <authorList>
            <person name="Gill S.R."/>
            <person name="Fouts D.E."/>
            <person name="Archer G.L."/>
            <person name="Mongodin E.F."/>
            <person name="DeBoy R.T."/>
            <person name="Ravel J."/>
            <person name="Paulsen I.T."/>
            <person name="Kolonay J.F."/>
            <person name="Brinkac L.M."/>
            <person name="Beanan M.J."/>
            <person name="Dodson R.J."/>
            <person name="Daugherty S.C."/>
            <person name="Madupu R."/>
            <person name="Angiuoli S.V."/>
            <person name="Durkin A.S."/>
            <person name="Haft D.H."/>
            <person name="Vamathevan J.J."/>
            <person name="Khouri H."/>
            <person name="Utterback T.R."/>
            <person name="Lee C."/>
            <person name="Dimitrov G."/>
            <person name="Jiang L."/>
            <person name="Qin H."/>
            <person name="Weidman J."/>
            <person name="Tran K."/>
            <person name="Kang K.H."/>
            <person name="Hance I.R."/>
            <person name="Nelson K.E."/>
            <person name="Fraser C.M."/>
        </authorList>
    </citation>
    <scope>NUCLEOTIDE SEQUENCE [LARGE SCALE GENOMIC DNA]</scope>
    <source>
        <strain>ATCC 35984 / DSM 28319 / BCRC 17069 / CCUG 31568 / BM 3577 / RP62A</strain>
    </source>
</reference>
<dbReference type="EC" id="3.5.1.5" evidence="1"/>
<dbReference type="EMBL" id="CP000029">
    <property type="protein sequence ID" value="AAW55243.1"/>
    <property type="molecule type" value="Genomic_DNA"/>
</dbReference>
<dbReference type="RefSeq" id="WP_001832399.1">
    <property type="nucleotide sequence ID" value="NC_002976.3"/>
</dbReference>
<dbReference type="SMR" id="Q5HLW1"/>
<dbReference type="STRING" id="176279.SERP1871"/>
<dbReference type="MEROPS" id="M38.982"/>
<dbReference type="GeneID" id="50018036"/>
<dbReference type="KEGG" id="ser:SERP1871"/>
<dbReference type="eggNOG" id="COG0804">
    <property type="taxonomic scope" value="Bacteria"/>
</dbReference>
<dbReference type="HOGENOM" id="CLU_000980_0_0_9"/>
<dbReference type="UniPathway" id="UPA00258">
    <property type="reaction ID" value="UER00370"/>
</dbReference>
<dbReference type="Proteomes" id="UP000000531">
    <property type="component" value="Chromosome"/>
</dbReference>
<dbReference type="GO" id="GO:0005737">
    <property type="term" value="C:cytoplasm"/>
    <property type="evidence" value="ECO:0007669"/>
    <property type="project" value="UniProtKB-SubCell"/>
</dbReference>
<dbReference type="GO" id="GO:0016151">
    <property type="term" value="F:nickel cation binding"/>
    <property type="evidence" value="ECO:0007669"/>
    <property type="project" value="UniProtKB-UniRule"/>
</dbReference>
<dbReference type="GO" id="GO:0009039">
    <property type="term" value="F:urease activity"/>
    <property type="evidence" value="ECO:0007669"/>
    <property type="project" value="UniProtKB-UniRule"/>
</dbReference>
<dbReference type="GO" id="GO:0043419">
    <property type="term" value="P:urea catabolic process"/>
    <property type="evidence" value="ECO:0007669"/>
    <property type="project" value="UniProtKB-UniRule"/>
</dbReference>
<dbReference type="CDD" id="cd00375">
    <property type="entry name" value="Urease_alpha"/>
    <property type="match status" value="1"/>
</dbReference>
<dbReference type="Gene3D" id="3.20.20.140">
    <property type="entry name" value="Metal-dependent hydrolases"/>
    <property type="match status" value="1"/>
</dbReference>
<dbReference type="Gene3D" id="2.30.40.10">
    <property type="entry name" value="Urease, subunit C, domain 1"/>
    <property type="match status" value="1"/>
</dbReference>
<dbReference type="HAMAP" id="MF_01953">
    <property type="entry name" value="Urease_alpha"/>
    <property type="match status" value="1"/>
</dbReference>
<dbReference type="InterPro" id="IPR006680">
    <property type="entry name" value="Amidohydro-rel"/>
</dbReference>
<dbReference type="InterPro" id="IPR011059">
    <property type="entry name" value="Metal-dep_hydrolase_composite"/>
</dbReference>
<dbReference type="InterPro" id="IPR032466">
    <property type="entry name" value="Metal_Hydrolase"/>
</dbReference>
<dbReference type="InterPro" id="IPR011612">
    <property type="entry name" value="Urease_alpha_N_dom"/>
</dbReference>
<dbReference type="InterPro" id="IPR050112">
    <property type="entry name" value="Urease_alpha_subunit"/>
</dbReference>
<dbReference type="InterPro" id="IPR017950">
    <property type="entry name" value="Urease_AS"/>
</dbReference>
<dbReference type="InterPro" id="IPR005848">
    <property type="entry name" value="Urease_asu"/>
</dbReference>
<dbReference type="InterPro" id="IPR017951">
    <property type="entry name" value="Urease_asu_c"/>
</dbReference>
<dbReference type="InterPro" id="IPR029754">
    <property type="entry name" value="Urease_Ni-bd"/>
</dbReference>
<dbReference type="NCBIfam" id="NF009686">
    <property type="entry name" value="PRK13207.1"/>
    <property type="match status" value="1"/>
</dbReference>
<dbReference type="NCBIfam" id="TIGR01792">
    <property type="entry name" value="urease_alph"/>
    <property type="match status" value="1"/>
</dbReference>
<dbReference type="PANTHER" id="PTHR43440">
    <property type="entry name" value="UREASE"/>
    <property type="match status" value="1"/>
</dbReference>
<dbReference type="PANTHER" id="PTHR43440:SF1">
    <property type="entry name" value="UREASE"/>
    <property type="match status" value="1"/>
</dbReference>
<dbReference type="Pfam" id="PF01979">
    <property type="entry name" value="Amidohydro_1"/>
    <property type="match status" value="1"/>
</dbReference>
<dbReference type="Pfam" id="PF00449">
    <property type="entry name" value="Urease_alpha"/>
    <property type="match status" value="1"/>
</dbReference>
<dbReference type="PRINTS" id="PR01752">
    <property type="entry name" value="UREASE"/>
</dbReference>
<dbReference type="SUPFAM" id="SSF51338">
    <property type="entry name" value="Composite domain of metallo-dependent hydrolases"/>
    <property type="match status" value="1"/>
</dbReference>
<dbReference type="SUPFAM" id="SSF51556">
    <property type="entry name" value="Metallo-dependent hydrolases"/>
    <property type="match status" value="1"/>
</dbReference>
<dbReference type="PROSITE" id="PS01120">
    <property type="entry name" value="UREASE_1"/>
    <property type="match status" value="1"/>
</dbReference>
<dbReference type="PROSITE" id="PS00145">
    <property type="entry name" value="UREASE_2"/>
    <property type="match status" value="1"/>
</dbReference>
<dbReference type="PROSITE" id="PS51368">
    <property type="entry name" value="UREASE_3"/>
    <property type="match status" value="1"/>
</dbReference>
<accession>Q5HLW1</accession>
<name>URE1_STAEQ</name>
<feature type="chain" id="PRO_0000067559" description="Urease subunit alpha">
    <location>
        <begin position="1"/>
        <end position="571"/>
    </location>
</feature>
<feature type="domain" description="Urease" evidence="1">
    <location>
        <begin position="133"/>
        <end position="571"/>
    </location>
</feature>
<feature type="active site" description="Proton donor" evidence="1">
    <location>
        <position position="324"/>
    </location>
</feature>
<feature type="binding site" evidence="1">
    <location>
        <position position="138"/>
    </location>
    <ligand>
        <name>Ni(2+)</name>
        <dbReference type="ChEBI" id="CHEBI:49786"/>
        <label>1</label>
    </ligand>
</feature>
<feature type="binding site" evidence="1">
    <location>
        <position position="140"/>
    </location>
    <ligand>
        <name>Ni(2+)</name>
        <dbReference type="ChEBI" id="CHEBI:49786"/>
        <label>1</label>
    </ligand>
</feature>
<feature type="binding site" description="via carbamate group" evidence="1">
    <location>
        <position position="221"/>
    </location>
    <ligand>
        <name>Ni(2+)</name>
        <dbReference type="ChEBI" id="CHEBI:49786"/>
        <label>1</label>
    </ligand>
</feature>
<feature type="binding site" description="via carbamate group" evidence="1">
    <location>
        <position position="221"/>
    </location>
    <ligand>
        <name>Ni(2+)</name>
        <dbReference type="ChEBI" id="CHEBI:49786"/>
        <label>2</label>
    </ligand>
</feature>
<feature type="binding site" evidence="1">
    <location>
        <position position="223"/>
    </location>
    <ligand>
        <name>substrate</name>
    </ligand>
</feature>
<feature type="binding site" evidence="1">
    <location>
        <position position="250"/>
    </location>
    <ligand>
        <name>Ni(2+)</name>
        <dbReference type="ChEBI" id="CHEBI:49786"/>
        <label>2</label>
    </ligand>
</feature>
<feature type="binding site" evidence="1">
    <location>
        <position position="276"/>
    </location>
    <ligand>
        <name>Ni(2+)</name>
        <dbReference type="ChEBI" id="CHEBI:49786"/>
        <label>2</label>
    </ligand>
</feature>
<feature type="binding site" evidence="1">
    <location>
        <position position="364"/>
    </location>
    <ligand>
        <name>Ni(2+)</name>
        <dbReference type="ChEBI" id="CHEBI:49786"/>
        <label>1</label>
    </ligand>
</feature>
<feature type="modified residue" description="N6-carboxylysine" evidence="1">
    <location>
        <position position="221"/>
    </location>
</feature>
<organism>
    <name type="scientific">Staphylococcus epidermidis (strain ATCC 35984 / DSM 28319 / BCRC 17069 / CCUG 31568 / BM 3577 / RP62A)</name>
    <dbReference type="NCBI Taxonomy" id="176279"/>
    <lineage>
        <taxon>Bacteria</taxon>
        <taxon>Bacillati</taxon>
        <taxon>Bacillota</taxon>
        <taxon>Bacilli</taxon>
        <taxon>Bacillales</taxon>
        <taxon>Staphylococcaceae</taxon>
        <taxon>Staphylococcus</taxon>
    </lineage>
</organism>
<gene>
    <name evidence="1" type="primary">ureC</name>
    <name type="ordered locus">SERP1871</name>
</gene>
<sequence>MSFKMTQSQYTSLYGPTVGDSVRLGDTNLFAQVEKDYANYGDEATFGGGKSIRDGMAQNPNVTRDDKNVADLVLTNALIIDYDKIVKADIGIKNGYIFKIGKAGNPDIMDNVDIIIGATTDIIAAEGKIVTAGGIDTHVHFINPEQAEVALESGITTHIGGGTGASEGAKATTVTPGPWHIHRMLEAAEEMPINVGFTGKGQAVNHTALIEQIHAGAIGLKVHEDWGATPSALSHALDVADEFDVQVALHADTLNEAGFMEDTMAAVKDRVLHMYHTEGAGGGHAPDLIKSAAYSNILPSSTNPTLPYTHNTVDEHLDMVMITHHLNASIPEDIAFADSRIRKETIAAEDVLQDMGVFSMVSSDSQAMGRVGEVVTRTWQVAHRMKEQRGPLDGDFEYHDNNRIKRYIAKYTINPAITHGISDYVGSVEAGKLADLVMWEPEFFGAKPDLVVKGGMINSAVNGDANGSIPTSEPLKYRKMYGQFGGNITHTAMTFVSNTAYENGIYRQLNLKRMVRPVRNIRNLTKADMKNNNATPKIDVDPQTYEVFVDGNKITSEAATELPLTQRYFLF</sequence>
<protein>
    <recommendedName>
        <fullName evidence="1">Urease subunit alpha</fullName>
        <ecNumber evidence="1">3.5.1.5</ecNumber>
    </recommendedName>
    <alternativeName>
        <fullName evidence="1">Urea amidohydrolase subunit alpha</fullName>
    </alternativeName>
</protein>
<evidence type="ECO:0000255" key="1">
    <source>
        <dbReference type="HAMAP-Rule" id="MF_01953"/>
    </source>
</evidence>
<proteinExistence type="inferred from homology"/>